<evidence type="ECO:0000255" key="1">
    <source>
        <dbReference type="HAMAP-Rule" id="MF_00087"/>
    </source>
</evidence>
<sequence length="436" mass="48960">MHYLIVSYSHKNTDIATRERLAFDNGVRSESFLRELVANKFINEGILLSTCNRVEFILSVKEAHKAGDFLMEKLSEYSKIPKEELSERADVYEDTGAIHHLFCVCSSLDSLVVGETQIAGQLKSAFKFAYDGGFCSQKLSRAMHFAFKCAASVRNCTEISKNPVSVASASVSKAKDILGDLGGDTAIVVGLGEMSQLTIKHLTALGCNVILVNRDKAKAEAFAKEFGGMVSVEGFPRLGELLNHHKMLFSATGAPHTVISKDMVEPKSFRRYWFDLAVPRDIEAFESETIRIFAVDDLQEIVNKNLSLREEQAKRAYGIIGRFTQEFYKWLQSLSVDPIIKAMREQAKEAALKEITKAISKGYLPKECEKSVEKIIHNSFNTFLHHPTIKLKEISEEPQSDTVVEAVKLLFGIQEDGLMLDRYKCEYDTTSKEREE</sequence>
<organism>
    <name type="scientific">Wolinella succinogenes (strain ATCC 29543 / DSM 1740 / CCUG 13145 / JCM 31913 / LMG 7466 / NCTC 11488 / FDC 602W)</name>
    <name type="common">Vibrio succinogenes</name>
    <dbReference type="NCBI Taxonomy" id="273121"/>
    <lineage>
        <taxon>Bacteria</taxon>
        <taxon>Pseudomonadati</taxon>
        <taxon>Campylobacterota</taxon>
        <taxon>Epsilonproteobacteria</taxon>
        <taxon>Campylobacterales</taxon>
        <taxon>Helicobacteraceae</taxon>
        <taxon>Wolinella</taxon>
    </lineage>
</organism>
<dbReference type="EC" id="1.2.1.70" evidence="1"/>
<dbReference type="EMBL" id="BX571661">
    <property type="protein sequence ID" value="CAE10621.1"/>
    <property type="molecule type" value="Genomic_DNA"/>
</dbReference>
<dbReference type="RefSeq" id="WP_011139405.1">
    <property type="nucleotide sequence ID" value="NC_005090.1"/>
</dbReference>
<dbReference type="SMR" id="Q7MBG5"/>
<dbReference type="STRING" id="273121.WS1581"/>
<dbReference type="KEGG" id="wsu:WS1581"/>
<dbReference type="eggNOG" id="COG0373">
    <property type="taxonomic scope" value="Bacteria"/>
</dbReference>
<dbReference type="HOGENOM" id="CLU_035113_2_2_7"/>
<dbReference type="UniPathway" id="UPA00251">
    <property type="reaction ID" value="UER00316"/>
</dbReference>
<dbReference type="Proteomes" id="UP000000422">
    <property type="component" value="Chromosome"/>
</dbReference>
<dbReference type="GO" id="GO:0008883">
    <property type="term" value="F:glutamyl-tRNA reductase activity"/>
    <property type="evidence" value="ECO:0007669"/>
    <property type="project" value="UniProtKB-UniRule"/>
</dbReference>
<dbReference type="GO" id="GO:0050661">
    <property type="term" value="F:NADP binding"/>
    <property type="evidence" value="ECO:0007669"/>
    <property type="project" value="InterPro"/>
</dbReference>
<dbReference type="GO" id="GO:0019353">
    <property type="term" value="P:protoporphyrinogen IX biosynthetic process from glutamate"/>
    <property type="evidence" value="ECO:0007669"/>
    <property type="project" value="TreeGrafter"/>
</dbReference>
<dbReference type="CDD" id="cd05213">
    <property type="entry name" value="NAD_bind_Glutamyl_tRNA_reduct"/>
    <property type="match status" value="1"/>
</dbReference>
<dbReference type="FunFam" id="3.30.460.30:FF:000001">
    <property type="entry name" value="Glutamyl-tRNA reductase"/>
    <property type="match status" value="1"/>
</dbReference>
<dbReference type="Gene3D" id="3.30.460.30">
    <property type="entry name" value="Glutamyl-tRNA reductase, N-terminal domain"/>
    <property type="match status" value="1"/>
</dbReference>
<dbReference type="Gene3D" id="3.40.50.720">
    <property type="entry name" value="NAD(P)-binding Rossmann-like Domain"/>
    <property type="match status" value="1"/>
</dbReference>
<dbReference type="HAMAP" id="MF_00087">
    <property type="entry name" value="Glu_tRNA_reductase"/>
    <property type="match status" value="1"/>
</dbReference>
<dbReference type="InterPro" id="IPR000343">
    <property type="entry name" value="4pyrrol_synth_GluRdtase"/>
</dbReference>
<dbReference type="InterPro" id="IPR015896">
    <property type="entry name" value="4pyrrol_synth_GluRdtase_dimer"/>
</dbReference>
<dbReference type="InterPro" id="IPR015895">
    <property type="entry name" value="4pyrrol_synth_GluRdtase_N"/>
</dbReference>
<dbReference type="InterPro" id="IPR018214">
    <property type="entry name" value="GluRdtase_CS"/>
</dbReference>
<dbReference type="InterPro" id="IPR036453">
    <property type="entry name" value="GluRdtase_dimer_dom_sf"/>
</dbReference>
<dbReference type="InterPro" id="IPR036343">
    <property type="entry name" value="GluRdtase_N_sf"/>
</dbReference>
<dbReference type="InterPro" id="IPR036291">
    <property type="entry name" value="NAD(P)-bd_dom_sf"/>
</dbReference>
<dbReference type="InterPro" id="IPR006151">
    <property type="entry name" value="Shikm_DH/Glu-tRNA_Rdtase"/>
</dbReference>
<dbReference type="NCBIfam" id="TIGR01035">
    <property type="entry name" value="hemA"/>
    <property type="match status" value="1"/>
</dbReference>
<dbReference type="PANTHER" id="PTHR43013">
    <property type="entry name" value="GLUTAMYL-TRNA REDUCTASE"/>
    <property type="match status" value="1"/>
</dbReference>
<dbReference type="PANTHER" id="PTHR43013:SF1">
    <property type="entry name" value="GLUTAMYL-TRNA REDUCTASE"/>
    <property type="match status" value="1"/>
</dbReference>
<dbReference type="Pfam" id="PF00745">
    <property type="entry name" value="GlutR_dimer"/>
    <property type="match status" value="1"/>
</dbReference>
<dbReference type="Pfam" id="PF05201">
    <property type="entry name" value="GlutR_N"/>
    <property type="match status" value="1"/>
</dbReference>
<dbReference type="Pfam" id="PF01488">
    <property type="entry name" value="Shikimate_DH"/>
    <property type="match status" value="1"/>
</dbReference>
<dbReference type="PIRSF" id="PIRSF000445">
    <property type="entry name" value="4pyrrol_synth_GluRdtase"/>
    <property type="match status" value="1"/>
</dbReference>
<dbReference type="SUPFAM" id="SSF69742">
    <property type="entry name" value="Glutamyl tRNA-reductase catalytic, N-terminal domain"/>
    <property type="match status" value="1"/>
</dbReference>
<dbReference type="SUPFAM" id="SSF69075">
    <property type="entry name" value="Glutamyl tRNA-reductase dimerization domain"/>
    <property type="match status" value="1"/>
</dbReference>
<dbReference type="SUPFAM" id="SSF51735">
    <property type="entry name" value="NAD(P)-binding Rossmann-fold domains"/>
    <property type="match status" value="1"/>
</dbReference>
<dbReference type="PROSITE" id="PS00747">
    <property type="entry name" value="GLUTR"/>
    <property type="match status" value="1"/>
</dbReference>
<protein>
    <recommendedName>
        <fullName evidence="1">Glutamyl-tRNA reductase</fullName>
        <shortName evidence="1">GluTR</shortName>
        <ecNumber evidence="1">1.2.1.70</ecNumber>
    </recommendedName>
</protein>
<proteinExistence type="inferred from homology"/>
<feature type="chain" id="PRO_0000114088" description="Glutamyl-tRNA reductase">
    <location>
        <begin position="1"/>
        <end position="436"/>
    </location>
</feature>
<feature type="active site" description="Nucleophile" evidence="1">
    <location>
        <position position="51"/>
    </location>
</feature>
<feature type="binding site" evidence="1">
    <location>
        <begin position="50"/>
        <end position="53"/>
    </location>
    <ligand>
        <name>substrate</name>
    </ligand>
</feature>
<feature type="binding site" evidence="1">
    <location>
        <position position="110"/>
    </location>
    <ligand>
        <name>substrate</name>
    </ligand>
</feature>
<feature type="binding site" evidence="1">
    <location>
        <begin position="115"/>
        <end position="117"/>
    </location>
    <ligand>
        <name>substrate</name>
    </ligand>
</feature>
<feature type="binding site" evidence="1">
    <location>
        <position position="121"/>
    </location>
    <ligand>
        <name>substrate</name>
    </ligand>
</feature>
<feature type="binding site" evidence="1">
    <location>
        <begin position="190"/>
        <end position="195"/>
    </location>
    <ligand>
        <name>NADP(+)</name>
        <dbReference type="ChEBI" id="CHEBI:58349"/>
    </ligand>
</feature>
<feature type="site" description="Important for activity" evidence="1">
    <location>
        <position position="100"/>
    </location>
</feature>
<accession>Q7MBG5</accession>
<name>HEM1_WOLSU</name>
<keyword id="KW-0521">NADP</keyword>
<keyword id="KW-0560">Oxidoreductase</keyword>
<keyword id="KW-0627">Porphyrin biosynthesis</keyword>
<keyword id="KW-1185">Reference proteome</keyword>
<gene>
    <name evidence="1" type="primary">hemA</name>
    <name type="ordered locus">WS1581</name>
</gene>
<comment type="function">
    <text evidence="1">Catalyzes the NADPH-dependent reduction of glutamyl-tRNA(Glu) to glutamate 1-semialdehyde (GSA).</text>
</comment>
<comment type="catalytic activity">
    <reaction evidence="1">
        <text>(S)-4-amino-5-oxopentanoate + tRNA(Glu) + NADP(+) = L-glutamyl-tRNA(Glu) + NADPH + H(+)</text>
        <dbReference type="Rhea" id="RHEA:12344"/>
        <dbReference type="Rhea" id="RHEA-COMP:9663"/>
        <dbReference type="Rhea" id="RHEA-COMP:9680"/>
        <dbReference type="ChEBI" id="CHEBI:15378"/>
        <dbReference type="ChEBI" id="CHEBI:57501"/>
        <dbReference type="ChEBI" id="CHEBI:57783"/>
        <dbReference type="ChEBI" id="CHEBI:58349"/>
        <dbReference type="ChEBI" id="CHEBI:78442"/>
        <dbReference type="ChEBI" id="CHEBI:78520"/>
        <dbReference type="EC" id="1.2.1.70"/>
    </reaction>
</comment>
<comment type="pathway">
    <text evidence="1">Porphyrin-containing compound metabolism; protoporphyrin-IX biosynthesis; 5-aminolevulinate from L-glutamyl-tRNA(Glu): step 1/2.</text>
</comment>
<comment type="subunit">
    <text evidence="1">Homodimer.</text>
</comment>
<comment type="domain">
    <text evidence="1">Possesses an unusual extended V-shaped dimeric structure with each monomer consisting of three distinct domains arranged along a curved 'spinal' alpha-helix. The N-terminal catalytic domain specifically recognizes the glutamate moiety of the substrate. The second domain is the NADPH-binding domain, and the third C-terminal domain is responsible for dimerization.</text>
</comment>
<comment type="miscellaneous">
    <text evidence="1">During catalysis, the active site Cys acts as a nucleophile attacking the alpha-carbonyl group of tRNA-bound glutamate with the formation of a thioester intermediate between enzyme and glutamate, and the concomitant release of tRNA(Glu). The thioester intermediate is finally reduced by direct hydride transfer from NADPH, to form the product GSA.</text>
</comment>
<comment type="similarity">
    <text evidence="1">Belongs to the glutamyl-tRNA reductase family.</text>
</comment>
<reference key="1">
    <citation type="journal article" date="2003" name="Proc. Natl. Acad. Sci. U.S.A.">
        <title>Complete genome sequence and analysis of Wolinella succinogenes.</title>
        <authorList>
            <person name="Baar C."/>
            <person name="Eppinger M."/>
            <person name="Raddatz G."/>
            <person name="Simon J."/>
            <person name="Lanz C."/>
            <person name="Klimmek O."/>
            <person name="Nandakumar R."/>
            <person name="Gross R."/>
            <person name="Rosinus A."/>
            <person name="Keller H."/>
            <person name="Jagtap P."/>
            <person name="Linke B."/>
            <person name="Meyer F."/>
            <person name="Lederer H."/>
            <person name="Schuster S.C."/>
        </authorList>
    </citation>
    <scope>NUCLEOTIDE SEQUENCE [LARGE SCALE GENOMIC DNA]</scope>
    <source>
        <strain>ATCC 29543 / DSM 1740 / CCUG 13145 / JCM 31913 / LMG 7466 / NCTC 11488 / FDC 602W</strain>
    </source>
</reference>